<gene>
    <name type="primary">Pard3</name>
    <name type="synonym">Par3</name>
</gene>
<feature type="chain" id="PRO_0000185071" description="Partitioning defective 3 homolog">
    <location>
        <begin position="1"/>
        <end position="1337"/>
    </location>
</feature>
<feature type="domain" description="PDZ 1" evidence="5">
    <location>
        <begin position="271"/>
        <end position="359"/>
    </location>
</feature>
<feature type="domain" description="PDZ 2" evidence="5">
    <location>
        <begin position="461"/>
        <end position="546"/>
    </location>
</feature>
<feature type="domain" description="PDZ 3" evidence="5">
    <location>
        <begin position="590"/>
        <end position="677"/>
    </location>
</feature>
<feature type="region of interest" description="Disordered" evidence="6">
    <location>
        <begin position="81"/>
        <end position="109"/>
    </location>
</feature>
<feature type="region of interest" description="Disordered" evidence="6">
    <location>
        <begin position="143"/>
        <end position="263"/>
    </location>
</feature>
<feature type="region of interest" description="Disordered" evidence="6">
    <location>
        <begin position="397"/>
        <end position="441"/>
    </location>
</feature>
<feature type="region of interest" description="Interaction with PRKCI and PRKCZ" evidence="12">
    <location>
        <begin position="712"/>
        <end position="936"/>
    </location>
</feature>
<feature type="region of interest" description="Disordered" evidence="6">
    <location>
        <begin position="866"/>
        <end position="888"/>
    </location>
</feature>
<feature type="region of interest" description="Disordered" evidence="6">
    <location>
        <begin position="932"/>
        <end position="1015"/>
    </location>
</feature>
<feature type="region of interest" description="Interaction with FRMD4A" evidence="3">
    <location>
        <begin position="935"/>
        <end position="1337"/>
    </location>
</feature>
<feature type="region of interest" description="Disordered" evidence="6">
    <location>
        <begin position="1028"/>
        <end position="1055"/>
    </location>
</feature>
<feature type="region of interest" description="Disordered" evidence="6">
    <location>
        <begin position="1110"/>
        <end position="1271"/>
    </location>
</feature>
<feature type="region of interest" description="Disordered" evidence="6">
    <location>
        <begin position="1284"/>
        <end position="1337"/>
    </location>
</feature>
<feature type="coiled-coil region" evidence="4">
    <location>
        <begin position="1050"/>
        <end position="1082"/>
    </location>
</feature>
<feature type="coiled-coil region" evidence="4">
    <location>
        <begin position="1149"/>
        <end position="1172"/>
    </location>
</feature>
<feature type="coiled-coil region" evidence="4">
    <location>
        <begin position="1199"/>
        <end position="1222"/>
    </location>
</feature>
<feature type="coiled-coil region" evidence="4">
    <location>
        <begin position="1278"/>
        <end position="1299"/>
    </location>
</feature>
<feature type="compositionally biased region" description="Low complexity" evidence="6">
    <location>
        <begin position="91"/>
        <end position="100"/>
    </location>
</feature>
<feature type="compositionally biased region" description="Polar residues" evidence="6">
    <location>
        <begin position="150"/>
        <end position="163"/>
    </location>
</feature>
<feature type="compositionally biased region" description="Polar residues" evidence="6">
    <location>
        <begin position="171"/>
        <end position="188"/>
    </location>
</feature>
<feature type="compositionally biased region" description="Basic and acidic residues" evidence="6">
    <location>
        <begin position="190"/>
        <end position="203"/>
    </location>
</feature>
<feature type="compositionally biased region" description="Polar residues" evidence="6">
    <location>
        <begin position="207"/>
        <end position="224"/>
    </location>
</feature>
<feature type="compositionally biased region" description="Acidic residues" evidence="6">
    <location>
        <begin position="939"/>
        <end position="953"/>
    </location>
</feature>
<feature type="compositionally biased region" description="Basic and acidic residues" evidence="6">
    <location>
        <begin position="981"/>
        <end position="1009"/>
    </location>
</feature>
<feature type="compositionally biased region" description="Basic and acidic residues" evidence="6">
    <location>
        <begin position="1030"/>
        <end position="1043"/>
    </location>
</feature>
<feature type="compositionally biased region" description="Polar residues" evidence="6">
    <location>
        <begin position="1138"/>
        <end position="1147"/>
    </location>
</feature>
<feature type="compositionally biased region" description="Basic and acidic residues" evidence="6">
    <location>
        <begin position="1148"/>
        <end position="1175"/>
    </location>
</feature>
<feature type="compositionally biased region" description="Low complexity" evidence="6">
    <location>
        <begin position="1180"/>
        <end position="1203"/>
    </location>
</feature>
<feature type="compositionally biased region" description="Polar residues" evidence="6">
    <location>
        <begin position="1219"/>
        <end position="1240"/>
    </location>
</feature>
<feature type="compositionally biased region" description="Basic and acidic residues" evidence="6">
    <location>
        <begin position="1284"/>
        <end position="1296"/>
    </location>
</feature>
<feature type="compositionally biased region" description="Polar residues" evidence="6">
    <location>
        <begin position="1318"/>
        <end position="1327"/>
    </location>
</feature>
<feature type="compositionally biased region" description="Basic and acidic residues" evidence="6">
    <location>
        <begin position="1328"/>
        <end position="1337"/>
    </location>
</feature>
<feature type="modified residue" description="Phosphoserine" evidence="2">
    <location>
        <position position="25"/>
    </location>
</feature>
<feature type="modified residue" description="Phosphothreonine" evidence="2">
    <location>
        <position position="91"/>
    </location>
</feature>
<feature type="modified residue" description="Phosphoserine" evidence="3">
    <location>
        <position position="156"/>
    </location>
</feature>
<feature type="modified residue" description="Phosphoserine" evidence="15">
    <location>
        <position position="174"/>
    </location>
</feature>
<feature type="modified residue" description="Phosphoserine" evidence="2">
    <location>
        <position position="383"/>
    </location>
</feature>
<feature type="modified residue" description="Phosphotyrosine" evidence="2">
    <location>
        <position position="489"/>
    </location>
</feature>
<feature type="modified residue" description="Phosphoserine" evidence="2">
    <location>
        <position position="692"/>
    </location>
</feature>
<feature type="modified residue" description="Phosphoserine" evidence="2">
    <location>
        <position position="695"/>
    </location>
</feature>
<feature type="modified residue" description="Phosphoserine" evidence="2">
    <location>
        <position position="715"/>
    </location>
</feature>
<feature type="modified residue" description="Phosphoserine" evidence="2">
    <location>
        <position position="728"/>
    </location>
</feature>
<feature type="modified residue" description="Phosphoserine" evidence="2">
    <location>
        <position position="809"/>
    </location>
</feature>
<feature type="modified residue" description="Phosphoserine" evidence="7 11">
    <location>
        <position position="827"/>
    </location>
</feature>
<feature type="modified residue" description="N6-acetyllysine" evidence="3">
    <location>
        <position position="834"/>
    </location>
</feature>
<feature type="modified residue" description="Phosphoserine" evidence="2">
    <location>
        <position position="837"/>
    </location>
</feature>
<feature type="modified residue" description="N6-acetyllysine" evidence="3">
    <location>
        <position position="851"/>
    </location>
</feature>
<feature type="modified residue" description="Phosphoserine" evidence="15">
    <location>
        <position position="852"/>
    </location>
</feature>
<feature type="modified residue" description="Phosphoserine" evidence="2">
    <location>
        <position position="873"/>
    </location>
</feature>
<feature type="modified residue" description="N6-acetyllysine" evidence="3">
    <location>
        <position position="885"/>
    </location>
</feature>
<feature type="modified residue" description="Phosphoserine; by AURKA" evidence="2">
    <location>
        <position position="962"/>
    </location>
</feature>
<feature type="modified residue" description="Phosphoserine" evidence="2">
    <location>
        <position position="971"/>
    </location>
</feature>
<feature type="modified residue" description="Phosphoserine" evidence="2">
    <location>
        <position position="973"/>
    </location>
</feature>
<feature type="modified residue" description="Phosphoserine" evidence="2">
    <location>
        <position position="1046"/>
    </location>
</feature>
<feature type="modified residue" description="N6-acetyllysine" evidence="3">
    <location>
        <position position="1331"/>
    </location>
</feature>
<feature type="splice variant" id="VSP_007475" description="In isoform 2." evidence="13">
    <location>
        <begin position="1034"/>
        <end position="1337"/>
    </location>
</feature>
<feature type="mutagenesis site" description="Reduces binding to membranes containing phosphoinositol lipids by half. Abolishes binding to membranes containing phosphoinositol lipids; when associated with E-546." evidence="8">
    <original>K</original>
    <variation>E</variation>
    <location>
        <position position="458"/>
    </location>
</feature>
<feature type="mutagenesis site" description="Slightly reduced binding to membranes containing phosphoinositol lipids." evidence="8">
    <original>K</original>
    <variation>A</variation>
    <location>
        <position position="491"/>
    </location>
</feature>
<feature type="mutagenesis site" description="Strongly reduced binding to membranes containing phosphoinositol lipids." evidence="8">
    <original>K</original>
    <variation>E</variation>
    <location>
        <position position="491"/>
    </location>
</feature>
<feature type="mutagenesis site" description="Slightly reduced binding to membranes containing phosphoinositol lipids; when associated with A-506." evidence="8">
    <original>R</original>
    <variation>A</variation>
    <location>
        <position position="504"/>
    </location>
</feature>
<feature type="mutagenesis site" description="Abolishes binding to membranes containing phosphoinositol lipids; when associated with E-506." evidence="8">
    <original>R</original>
    <variation>E</variation>
    <location>
        <position position="504"/>
    </location>
</feature>
<feature type="mutagenesis site" description="Slightly reduced binding to membranes containing phosphoinositol lipids; when associated with A-504." evidence="8">
    <original>K</original>
    <variation>A</variation>
    <location>
        <position position="506"/>
    </location>
</feature>
<feature type="mutagenesis site" description="Abolishes binding to membranes containing phosphoinositol lipids; when associated with E-504." evidence="8">
    <original>K</original>
    <variation>E</variation>
    <location>
        <position position="506"/>
    </location>
</feature>
<feature type="mutagenesis site" description="Reduces binding to membranes containing phosphoinositol lipids by half; when associated with A-535." evidence="8">
    <original>R</original>
    <variation>A</variation>
    <location>
        <position position="532"/>
    </location>
</feature>
<feature type="mutagenesis site" description="Almost abolished binding to membranes containing phosphoinositol lipids; when associated with E-535." evidence="8">
    <original>R</original>
    <variation>E</variation>
    <location>
        <position position="532"/>
    </location>
</feature>
<feature type="mutagenesis site" description="Reduces binding to membranes containing phosphoinositol lipids by half; when associated with A-532." evidence="8">
    <original>K</original>
    <variation>A</variation>
    <location>
        <position position="535"/>
    </location>
</feature>
<feature type="mutagenesis site" description="Almost abolished binding to membranes containing phosphoinositol lipids; when associated with E-532." evidence="8">
    <original>K</original>
    <variation>E</variation>
    <location>
        <position position="535"/>
    </location>
</feature>
<feature type="mutagenesis site" description="Abolishes binding to membranes containing phosphoinositol lipids; when associated with E-458." evidence="8">
    <original>R</original>
    <variation>E</variation>
    <location>
        <position position="546"/>
    </location>
</feature>
<feature type="mutagenesis site" description="Abolishes binding to PKCI." evidence="11">
    <original>S</original>
    <variation>E</variation>
    <location>
        <position position="827"/>
    </location>
</feature>
<feature type="mutagenesis site" description="No detectable impact on binding to PKCI." evidence="11">
    <original>S</original>
    <variation>A</variation>
    <location>
        <position position="829"/>
    </location>
</feature>
<feature type="mutagenesis site" description="Abolishes binding to PKCI." evidence="11">
    <original>S</original>
    <variation>E</variation>
    <location>
        <position position="829"/>
    </location>
</feature>
<feature type="strand" evidence="20">
    <location>
        <begin position="2"/>
        <end position="7"/>
    </location>
</feature>
<feature type="strand" evidence="20">
    <location>
        <begin position="10"/>
        <end position="17"/>
    </location>
</feature>
<feature type="helix" evidence="20">
    <location>
        <begin position="23"/>
        <end position="38"/>
    </location>
</feature>
<feature type="strand" evidence="20">
    <location>
        <begin position="46"/>
        <end position="52"/>
    </location>
</feature>
<feature type="strand" evidence="18">
    <location>
        <begin position="54"/>
        <end position="56"/>
    </location>
</feature>
<feature type="helix" evidence="20">
    <location>
        <begin position="65"/>
        <end position="68"/>
    </location>
</feature>
<feature type="strand" evidence="20">
    <location>
        <begin position="74"/>
        <end position="81"/>
    </location>
</feature>
<feature type="strand" evidence="19">
    <location>
        <begin position="458"/>
        <end position="465"/>
    </location>
</feature>
<feature type="strand" evidence="19">
    <location>
        <begin position="472"/>
        <end position="477"/>
    </location>
</feature>
<feature type="strand" evidence="19">
    <location>
        <begin position="481"/>
        <end position="484"/>
    </location>
</feature>
<feature type="strand" evidence="19">
    <location>
        <begin position="488"/>
        <end position="493"/>
    </location>
</feature>
<feature type="strand" evidence="19">
    <location>
        <begin position="495"/>
        <end position="497"/>
    </location>
</feature>
<feature type="helix" evidence="19">
    <location>
        <begin position="498"/>
        <end position="502"/>
    </location>
</feature>
<feature type="strand" evidence="19">
    <location>
        <begin position="507"/>
        <end position="514"/>
    </location>
</feature>
<feature type="strand" evidence="19">
    <location>
        <begin position="520"/>
        <end position="522"/>
    </location>
</feature>
<feature type="helix" evidence="19">
    <location>
        <begin position="524"/>
        <end position="533"/>
    </location>
</feature>
<feature type="strand" evidence="19">
    <location>
        <begin position="539"/>
        <end position="546"/>
    </location>
</feature>
<feature type="strand" evidence="21">
    <location>
        <begin position="585"/>
        <end position="593"/>
    </location>
</feature>
<feature type="turn" evidence="16">
    <location>
        <begin position="594"/>
        <end position="599"/>
    </location>
</feature>
<feature type="strand" evidence="21">
    <location>
        <begin position="603"/>
        <end position="610"/>
    </location>
</feature>
<feature type="turn" evidence="21">
    <location>
        <begin position="611"/>
        <end position="614"/>
    </location>
</feature>
<feature type="strand" evidence="21">
    <location>
        <begin position="615"/>
        <end position="624"/>
    </location>
</feature>
<feature type="helix" evidence="21">
    <location>
        <begin position="629"/>
        <end position="633"/>
    </location>
</feature>
<feature type="strand" evidence="21">
    <location>
        <begin position="641"/>
        <end position="645"/>
    </location>
</feature>
<feature type="strand" evidence="16">
    <location>
        <begin position="648"/>
        <end position="653"/>
    </location>
</feature>
<feature type="helix" evidence="21">
    <location>
        <begin position="655"/>
        <end position="666"/>
    </location>
</feature>
<feature type="turn" evidence="17">
    <location>
        <begin position="667"/>
        <end position="669"/>
    </location>
</feature>
<feature type="strand" evidence="21">
    <location>
        <begin position="674"/>
        <end position="682"/>
    </location>
</feature>
<dbReference type="EMBL" id="AB005549">
    <property type="protein sequence ID" value="BAA34216.1"/>
    <property type="molecule type" value="mRNA"/>
</dbReference>
<dbReference type="PIR" id="T13948">
    <property type="entry name" value="T13948"/>
</dbReference>
<dbReference type="RefSeq" id="NP_112514.1">
    <molecule id="Q9Z340-1"/>
    <property type="nucleotide sequence ID" value="NM_031235.3"/>
</dbReference>
<dbReference type="PDB" id="2K1Z">
    <property type="method" value="NMR"/>
    <property type="chains" value="A=582-685"/>
</dbReference>
<dbReference type="PDB" id="2K20">
    <property type="method" value="NMR"/>
    <property type="chains" value="A=582-685"/>
</dbReference>
<dbReference type="PDB" id="2NS5">
    <property type="method" value="NMR"/>
    <property type="chains" value="A=2-83"/>
</dbReference>
<dbReference type="PDB" id="2OGP">
    <property type="method" value="NMR"/>
    <property type="chains" value="A=454-550"/>
</dbReference>
<dbReference type="PDB" id="3ZEE">
    <property type="method" value="EM"/>
    <property type="resolution" value="6.10 A"/>
    <property type="chains" value="A=2-82"/>
</dbReference>
<dbReference type="PDB" id="4DC2">
    <property type="method" value="X-ray"/>
    <property type="resolution" value="2.40 A"/>
    <property type="chains" value="Z=813-840"/>
</dbReference>
<dbReference type="PDB" id="4I6P">
    <property type="method" value="X-ray"/>
    <property type="resolution" value="2.90 A"/>
    <property type="chains" value="A/B=2-83"/>
</dbReference>
<dbReference type="PDB" id="6JUE">
    <property type="method" value="X-ray"/>
    <property type="resolution" value="1.55 A"/>
    <property type="chains" value="L=582-685"/>
</dbReference>
<dbReference type="PDB" id="9IMP">
    <property type="method" value="X-ray"/>
    <property type="resolution" value="2.87 A"/>
    <property type="chains" value="A/B/C/D/E/F=580-685"/>
</dbReference>
<dbReference type="PDBsum" id="2K1Z"/>
<dbReference type="PDBsum" id="2K20"/>
<dbReference type="PDBsum" id="2NS5"/>
<dbReference type="PDBsum" id="2OGP"/>
<dbReference type="PDBsum" id="3ZEE"/>
<dbReference type="PDBsum" id="4DC2"/>
<dbReference type="PDBsum" id="4I6P"/>
<dbReference type="PDBsum" id="6JUE"/>
<dbReference type="PDBsum" id="9IMP"/>
<dbReference type="SMR" id="Q9Z340"/>
<dbReference type="BioGRID" id="249693">
    <property type="interactions" value="4"/>
</dbReference>
<dbReference type="CORUM" id="Q9Z340"/>
<dbReference type="DIP" id="DIP-33271N"/>
<dbReference type="FunCoup" id="Q9Z340">
    <property type="interactions" value="2981"/>
</dbReference>
<dbReference type="IntAct" id="Q9Z340">
    <property type="interactions" value="2"/>
</dbReference>
<dbReference type="MINT" id="Q9Z340"/>
<dbReference type="STRING" id="10116.ENSRNOP00000048964"/>
<dbReference type="iPTMnet" id="Q9Z340"/>
<dbReference type="PhosphoSitePlus" id="Q9Z340"/>
<dbReference type="PaxDb" id="10116-ENSRNOP00000048964"/>
<dbReference type="Ensembl" id="ENSRNOT00000042623.5">
    <molecule id="Q9Z340-1"/>
    <property type="protein sequence ID" value="ENSRNOP00000048964.4"/>
    <property type="gene ID" value="ENSRNOG00000032437.6"/>
</dbReference>
<dbReference type="GeneID" id="81918"/>
<dbReference type="KEGG" id="rno:81918"/>
<dbReference type="UCSC" id="RGD:620374">
    <molecule id="Q9Z340-1"/>
    <property type="organism name" value="rat"/>
</dbReference>
<dbReference type="AGR" id="RGD:620374"/>
<dbReference type="CTD" id="56288"/>
<dbReference type="RGD" id="620374">
    <property type="gene designation" value="Pard3"/>
</dbReference>
<dbReference type="eggNOG" id="KOG3528">
    <property type="taxonomic scope" value="Eukaryota"/>
</dbReference>
<dbReference type="GeneTree" id="ENSGT00950000183214"/>
<dbReference type="HOGENOM" id="CLU_006629_0_0_1"/>
<dbReference type="InParanoid" id="Q9Z340"/>
<dbReference type="OMA" id="WPNSKPY"/>
<dbReference type="OrthoDB" id="6264899at2759"/>
<dbReference type="PhylomeDB" id="Q9Z340"/>
<dbReference type="Reactome" id="R-RNO-2173791">
    <property type="pathway name" value="TGF-beta receptor signaling in EMT (epithelial to mesenchymal transition)"/>
</dbReference>
<dbReference type="Reactome" id="R-RNO-420029">
    <property type="pathway name" value="Tight junction interactions"/>
</dbReference>
<dbReference type="CD-CODE" id="99212B2A">
    <property type="entry name" value="Par complex"/>
</dbReference>
<dbReference type="EvolutionaryTrace" id="Q9Z340"/>
<dbReference type="PRO" id="PR:Q9Z340"/>
<dbReference type="Proteomes" id="UP000002494">
    <property type="component" value="Chromosome 19"/>
</dbReference>
<dbReference type="Bgee" id="ENSRNOG00000032437">
    <property type="expression patterns" value="Expressed in esophagus and 19 other cell types or tissues"/>
</dbReference>
<dbReference type="ExpressionAtlas" id="Q9Z340">
    <property type="expression patterns" value="baseline and differential"/>
</dbReference>
<dbReference type="GO" id="GO:0005912">
    <property type="term" value="C:adherens junction"/>
    <property type="evidence" value="ECO:0000266"/>
    <property type="project" value="RGD"/>
</dbReference>
<dbReference type="GO" id="GO:0043296">
    <property type="term" value="C:apical junction complex"/>
    <property type="evidence" value="ECO:0000266"/>
    <property type="project" value="RGD"/>
</dbReference>
<dbReference type="GO" id="GO:0016324">
    <property type="term" value="C:apical plasma membrane"/>
    <property type="evidence" value="ECO:0000318"/>
    <property type="project" value="GO_Central"/>
</dbReference>
<dbReference type="GO" id="GO:0044295">
    <property type="term" value="C:axonal growth cone"/>
    <property type="evidence" value="ECO:0000314"/>
    <property type="project" value="RGD"/>
</dbReference>
<dbReference type="GO" id="GO:0005923">
    <property type="term" value="C:bicellular tight junction"/>
    <property type="evidence" value="ECO:0000250"/>
    <property type="project" value="UniProtKB"/>
</dbReference>
<dbReference type="GO" id="GO:0005938">
    <property type="term" value="C:cell cortex"/>
    <property type="evidence" value="ECO:0000318"/>
    <property type="project" value="GO_Central"/>
</dbReference>
<dbReference type="GO" id="GO:0030054">
    <property type="term" value="C:cell junction"/>
    <property type="evidence" value="ECO:0000266"/>
    <property type="project" value="RGD"/>
</dbReference>
<dbReference type="GO" id="GO:0005911">
    <property type="term" value="C:cell-cell junction"/>
    <property type="evidence" value="ECO:0000314"/>
    <property type="project" value="UniProtKB"/>
</dbReference>
<dbReference type="GO" id="GO:0005737">
    <property type="term" value="C:cytoplasm"/>
    <property type="evidence" value="ECO:0000266"/>
    <property type="project" value="RGD"/>
</dbReference>
<dbReference type="GO" id="GO:0012505">
    <property type="term" value="C:endomembrane system"/>
    <property type="evidence" value="ECO:0007669"/>
    <property type="project" value="UniProtKB-SubCell"/>
</dbReference>
<dbReference type="GO" id="GO:0033269">
    <property type="term" value="C:internode region of axon"/>
    <property type="evidence" value="ECO:0000250"/>
    <property type="project" value="UniProtKB"/>
</dbReference>
<dbReference type="GO" id="GO:0043219">
    <property type="term" value="C:lateral loop"/>
    <property type="evidence" value="ECO:0000266"/>
    <property type="project" value="RGD"/>
</dbReference>
<dbReference type="GO" id="GO:0043025">
    <property type="term" value="C:neuronal cell body"/>
    <property type="evidence" value="ECO:0000314"/>
    <property type="project" value="RGD"/>
</dbReference>
<dbReference type="GO" id="GO:0120157">
    <property type="term" value="C:PAR polarity complex"/>
    <property type="evidence" value="ECO:0000266"/>
    <property type="project" value="RGD"/>
</dbReference>
<dbReference type="GO" id="GO:0032991">
    <property type="term" value="C:protein-containing complex"/>
    <property type="evidence" value="ECO:0000314"/>
    <property type="project" value="RGD"/>
</dbReference>
<dbReference type="GO" id="GO:0043220">
    <property type="term" value="C:Schmidt-Lanterman incisure"/>
    <property type="evidence" value="ECO:0000266"/>
    <property type="project" value="RGD"/>
</dbReference>
<dbReference type="GO" id="GO:0005819">
    <property type="term" value="C:spindle"/>
    <property type="evidence" value="ECO:0000266"/>
    <property type="project" value="RGD"/>
</dbReference>
<dbReference type="GO" id="GO:0042802">
    <property type="term" value="F:identical protein binding"/>
    <property type="evidence" value="ECO:0000353"/>
    <property type="project" value="IntAct"/>
</dbReference>
<dbReference type="GO" id="GO:0035091">
    <property type="term" value="F:phosphatidylinositol binding"/>
    <property type="evidence" value="ECO:0000318"/>
    <property type="project" value="GO_Central"/>
</dbReference>
<dbReference type="GO" id="GO:0005547">
    <property type="term" value="F:phosphatidylinositol-3,4,5-trisphosphate binding"/>
    <property type="evidence" value="ECO:0000314"/>
    <property type="project" value="UniProtKB"/>
</dbReference>
<dbReference type="GO" id="GO:0032266">
    <property type="term" value="F:phosphatidylinositol-3-phosphate binding"/>
    <property type="evidence" value="ECO:0000314"/>
    <property type="project" value="UniProtKB"/>
</dbReference>
<dbReference type="GO" id="GO:0005546">
    <property type="term" value="F:phosphatidylinositol-4,5-bisphosphate binding"/>
    <property type="evidence" value="ECO:0000314"/>
    <property type="project" value="UniProtKB"/>
</dbReference>
<dbReference type="GO" id="GO:0019903">
    <property type="term" value="F:protein phosphatase binding"/>
    <property type="evidence" value="ECO:0000353"/>
    <property type="project" value="UniProtKB"/>
</dbReference>
<dbReference type="GO" id="GO:0003383">
    <property type="term" value="P:apical constriction"/>
    <property type="evidence" value="ECO:0000266"/>
    <property type="project" value="RGD"/>
</dbReference>
<dbReference type="GO" id="GO:0070830">
    <property type="term" value="P:bicellular tight junction assembly"/>
    <property type="evidence" value="ECO:0000315"/>
    <property type="project" value="UniProtKB"/>
</dbReference>
<dbReference type="GO" id="GO:0007155">
    <property type="term" value="P:cell adhesion"/>
    <property type="evidence" value="ECO:0000318"/>
    <property type="project" value="GO_Central"/>
</dbReference>
<dbReference type="GO" id="GO:0051301">
    <property type="term" value="P:cell division"/>
    <property type="evidence" value="ECO:0007669"/>
    <property type="project" value="UniProtKB-KW"/>
</dbReference>
<dbReference type="GO" id="GO:0051642">
    <property type="term" value="P:centrosome localization"/>
    <property type="evidence" value="ECO:0000266"/>
    <property type="project" value="RGD"/>
</dbReference>
<dbReference type="GO" id="GO:0030010">
    <property type="term" value="P:establishment of cell polarity"/>
    <property type="evidence" value="ECO:0000318"/>
    <property type="project" value="GO_Central"/>
</dbReference>
<dbReference type="GO" id="GO:0051660">
    <property type="term" value="P:establishment of centrosome localization"/>
    <property type="evidence" value="ECO:0000318"/>
    <property type="project" value="GO_Central"/>
</dbReference>
<dbReference type="GO" id="GO:0090162">
    <property type="term" value="P:establishment of epithelial cell polarity"/>
    <property type="evidence" value="ECO:0000315"/>
    <property type="project" value="UniProtKB"/>
</dbReference>
<dbReference type="GO" id="GO:0045197">
    <property type="term" value="P:establishment or maintenance of epithelial cell apical/basal polarity"/>
    <property type="evidence" value="ECO:0000266"/>
    <property type="project" value="RGD"/>
</dbReference>
<dbReference type="GO" id="GO:0000226">
    <property type="term" value="P:microtubule cytoskeleton organization"/>
    <property type="evidence" value="ECO:0000266"/>
    <property type="project" value="RGD"/>
</dbReference>
<dbReference type="GO" id="GO:0022011">
    <property type="term" value="P:myelination in peripheral nervous system"/>
    <property type="evidence" value="ECO:0000250"/>
    <property type="project" value="UniProtKB"/>
</dbReference>
<dbReference type="GO" id="GO:0010801">
    <property type="term" value="P:negative regulation of peptidyl-threonine phosphorylation"/>
    <property type="evidence" value="ECO:0000250"/>
    <property type="project" value="UniProtKB"/>
</dbReference>
<dbReference type="GO" id="GO:0031643">
    <property type="term" value="P:positive regulation of myelination"/>
    <property type="evidence" value="ECO:0000250"/>
    <property type="project" value="UniProtKB"/>
</dbReference>
<dbReference type="GO" id="GO:0002092">
    <property type="term" value="P:positive regulation of receptor internalization"/>
    <property type="evidence" value="ECO:0000266"/>
    <property type="project" value="RGD"/>
</dbReference>
<dbReference type="GO" id="GO:0008104">
    <property type="term" value="P:protein localization"/>
    <property type="evidence" value="ECO:0000318"/>
    <property type="project" value="GO_Central"/>
</dbReference>
<dbReference type="GO" id="GO:0006612">
    <property type="term" value="P:protein targeting to membrane"/>
    <property type="evidence" value="ECO:0000314"/>
    <property type="project" value="UniProtKB"/>
</dbReference>
<dbReference type="GO" id="GO:0032970">
    <property type="term" value="P:regulation of actin filament-based process"/>
    <property type="evidence" value="ECO:0000266"/>
    <property type="project" value="RGD"/>
</dbReference>
<dbReference type="GO" id="GO:0060341">
    <property type="term" value="P:regulation of cellular localization"/>
    <property type="evidence" value="ECO:0000315"/>
    <property type="project" value="RGD"/>
</dbReference>
<dbReference type="GO" id="GO:0044319">
    <property type="term" value="P:wound healing, spreading of cells"/>
    <property type="evidence" value="ECO:0000266"/>
    <property type="project" value="RGD"/>
</dbReference>
<dbReference type="CDD" id="cd06691">
    <property type="entry name" value="PDZ1_Par3-like"/>
    <property type="match status" value="1"/>
</dbReference>
<dbReference type="CDD" id="cd23058">
    <property type="entry name" value="PDZ2_Par3-like"/>
    <property type="match status" value="1"/>
</dbReference>
<dbReference type="CDD" id="cd23059">
    <property type="entry name" value="PDZ3_Par3-like"/>
    <property type="match status" value="1"/>
</dbReference>
<dbReference type="FunFam" id="2.30.42.10:FF:000078">
    <property type="entry name" value="Partitioning defective 3 homolog B"/>
    <property type="match status" value="1"/>
</dbReference>
<dbReference type="FunFam" id="2.30.42.10:FF:000011">
    <property type="entry name" value="partitioning defective 3 homolog isoform X1"/>
    <property type="match status" value="1"/>
</dbReference>
<dbReference type="FunFam" id="2.30.42.10:FF:000040">
    <property type="entry name" value="partitioning defective 3 homolog isoform X2"/>
    <property type="match status" value="1"/>
</dbReference>
<dbReference type="FunFam" id="3.10.20.90:FF:000017">
    <property type="entry name" value="partitioning defective 3 homolog isoform X2"/>
    <property type="match status" value="1"/>
</dbReference>
<dbReference type="Gene3D" id="2.30.42.10">
    <property type="match status" value="3"/>
</dbReference>
<dbReference type="Gene3D" id="3.10.20.90">
    <property type="entry name" value="Phosphatidylinositol 3-kinase Catalytic Subunit, Chain A, domain 1"/>
    <property type="match status" value="1"/>
</dbReference>
<dbReference type="InterPro" id="IPR052213">
    <property type="entry name" value="PAR3"/>
</dbReference>
<dbReference type="InterPro" id="IPR021922">
    <property type="entry name" value="Par3/HAL_N"/>
</dbReference>
<dbReference type="InterPro" id="IPR001478">
    <property type="entry name" value="PDZ"/>
</dbReference>
<dbReference type="InterPro" id="IPR036034">
    <property type="entry name" value="PDZ_sf"/>
</dbReference>
<dbReference type="PANTHER" id="PTHR16484:SF10">
    <property type="entry name" value="PARTITIONING DEFECTIVE 3 HOMOLOG"/>
    <property type="match status" value="1"/>
</dbReference>
<dbReference type="PANTHER" id="PTHR16484">
    <property type="entry name" value="PARTITIONING DEFECTIVE 3 RELATED"/>
    <property type="match status" value="1"/>
</dbReference>
<dbReference type="Pfam" id="PF12053">
    <property type="entry name" value="Par3_HAL_N_term"/>
    <property type="match status" value="1"/>
</dbReference>
<dbReference type="Pfam" id="PF00595">
    <property type="entry name" value="PDZ"/>
    <property type="match status" value="3"/>
</dbReference>
<dbReference type="SMART" id="SM00228">
    <property type="entry name" value="PDZ"/>
    <property type="match status" value="3"/>
</dbReference>
<dbReference type="SUPFAM" id="SSF50156">
    <property type="entry name" value="PDZ domain-like"/>
    <property type="match status" value="3"/>
</dbReference>
<dbReference type="PROSITE" id="PS50106">
    <property type="entry name" value="PDZ"/>
    <property type="match status" value="3"/>
</dbReference>
<keyword id="KW-0002">3D-structure</keyword>
<keyword id="KW-0007">Acetylation</keyword>
<keyword id="KW-0025">Alternative splicing</keyword>
<keyword id="KW-0131">Cell cycle</keyword>
<keyword id="KW-0132">Cell division</keyword>
<keyword id="KW-0965">Cell junction</keyword>
<keyword id="KW-1003">Cell membrane</keyword>
<keyword id="KW-0175">Coiled coil</keyword>
<keyword id="KW-0963">Cytoplasm</keyword>
<keyword id="KW-0206">Cytoskeleton</keyword>
<keyword id="KW-0221">Differentiation</keyword>
<keyword id="KW-0446">Lipid-binding</keyword>
<keyword id="KW-0472">Membrane</keyword>
<keyword id="KW-0597">Phosphoprotein</keyword>
<keyword id="KW-1185">Reference proteome</keyword>
<keyword id="KW-0677">Repeat</keyword>
<keyword id="KW-0796">Tight junction</keyword>
<reference key="1">
    <citation type="journal article" date="1998" name="J. Cell Biol.">
        <title>An atypical PKC directly associates and colocalizes at the epithelial tight junction with ASIP, a mammalian homologue of Caenorhabditis elegans polarity protein PAR-3.</title>
        <authorList>
            <person name="Izumi Y."/>
            <person name="Hirose T."/>
            <person name="Tamai Y."/>
            <person name="Hirai S."/>
            <person name="Nagashima Y."/>
            <person name="Fujimoto T."/>
            <person name="Tabuse Y."/>
            <person name="Kemphues K.J."/>
            <person name="Ohno S."/>
        </authorList>
    </citation>
    <scope>NUCLEOTIDE SEQUENCE [MRNA] (ISOFORM 1)</scope>
    <scope>INTERACTION WITH PRKCI AND PRKCZ</scope>
    <source>
        <tissue>Fibroblast</tissue>
    </source>
</reference>
<reference key="2">
    <citation type="journal article" date="2002" name="J. Cell Sci.">
        <title>Involvement of ASIP/PAR-3 in the promotion of epithelial tight junction formation.</title>
        <authorList>
            <person name="Hirose T."/>
            <person name="Izumi Y."/>
            <person name="Nagashima Y."/>
            <person name="Tamai-Nagai Y."/>
            <person name="Kurihara H."/>
            <person name="Sakai T."/>
            <person name="Suzuki Y."/>
            <person name="Yamanaka T."/>
            <person name="Suzuki A."/>
            <person name="Mizuno K."/>
            <person name="Ohno S."/>
        </authorList>
    </citation>
    <scope>NUCLEOTIDE SEQUENCE [MRNA] (ISOFORM 2)</scope>
    <scope>SUBCELLULAR LOCATION</scope>
    <scope>PHOSPHORYLATION AT SER-827</scope>
</reference>
<reference key="3">
    <citation type="journal article" date="2011" name="Proc. Natl. Acad. Sci. U.S.A.">
        <title>Sir-two-homolog 2 (Sirt2) modulates peripheral myelination through polarity protein Par-3/atypical protein kinase C (aPKC) signaling.</title>
        <authorList>
            <person name="Beirowski B."/>
            <person name="Gustin J."/>
            <person name="Armour S.M."/>
            <person name="Yamamoto H."/>
            <person name="Viader A."/>
            <person name="North B.J."/>
            <person name="Michan S."/>
            <person name="Baloh R.H."/>
            <person name="Golden J.P."/>
            <person name="Schmidt R.E."/>
            <person name="Sinclair D.A."/>
            <person name="Auwerx J."/>
            <person name="Milbrandt J."/>
        </authorList>
    </citation>
    <scope>FUNCTION IN REGULATION OF PERIPHERAL MYELINATION</scope>
    <scope>ACETYLATION</scope>
    <scope>DEACETYLATION BY SIRT2</scope>
</reference>
<reference key="4">
    <citation type="journal article" date="2012" name="Nat. Commun.">
        <title>Quantitative maps of protein phosphorylation sites across 14 different rat organs and tissues.</title>
        <authorList>
            <person name="Lundby A."/>
            <person name="Secher A."/>
            <person name="Lage K."/>
            <person name="Nordsborg N.B."/>
            <person name="Dmytriyev A."/>
            <person name="Lundby C."/>
            <person name="Olsen J.V."/>
        </authorList>
    </citation>
    <scope>PHOSPHORYLATION [LARGE SCALE ANALYSIS] AT SER-174 AND SER-852</scope>
    <scope>IDENTIFICATION BY MASS SPECTROMETRY [LARGE SCALE ANALYSIS]</scope>
</reference>
<reference key="5">
    <citation type="journal article" date="2007" name="EMBO J.">
        <title>The Par-3 NTD adopts a PB1-like structure required for Par-3 oligomerization and membrane localization.</title>
        <authorList>
            <person name="Feng W."/>
            <person name="Wu H."/>
            <person name="Chan L.N."/>
            <person name="Zhang M."/>
        </authorList>
    </citation>
    <scope>STRUCTURE BY NMR OF 2-83</scope>
    <scope>SUBCELLULAR LOCATION</scope>
    <scope>DOMAIN</scope>
</reference>
<reference key="6">
    <citation type="journal article" date="2007" name="Mol. Cell">
        <title>PDZ domains of Par-3 as potential phosphoinositide signaling integrators.</title>
        <authorList>
            <person name="Wu H."/>
            <person name="Feng W."/>
            <person name="Chen J."/>
            <person name="Chan L.N."/>
            <person name="Huang S."/>
            <person name="Zhang M."/>
        </authorList>
    </citation>
    <scope>STRUCTURE BY NMR OF 454-550</scope>
    <scope>SUBCELLULAR LOCATION</scope>
    <scope>FUNCTION</scope>
    <scope>PHOSPHOINOSITOL LIPID BINDING</scope>
    <scope>DOMAIN</scope>
    <scope>MUTAGENESIS OF LYS-458; LYS-491; ARG-504; LYS-506; ARG-532; LYS-535 AND ARG-546</scope>
    <scope>INTERACTION WITH PTEN</scope>
</reference>
<reference key="7">
    <citation type="journal article" date="2008" name="J. Biol. Chem.">
        <title>Par-3-mediated junctional localization of the lipid phosphatase PTEN is required for cell polarity establishment.</title>
        <authorList>
            <person name="Feng W."/>
            <person name="Wu H."/>
            <person name="Chan L.N."/>
            <person name="Zhang M."/>
        </authorList>
    </citation>
    <scope>STRUCTURE BY NMR OF 582-685 IN COMPLEX WITH PTEN</scope>
    <scope>SUBUNIT</scope>
    <scope>SUBCELLULAR LOCATION</scope>
    <scope>FUNCTION</scope>
</reference>
<reference key="8">
    <citation type="journal article" date="2012" name="Structure">
        <title>Substrate recognition mechanism of atypical protein kinase Cs revealed by the structure of PKCiota in complex with a substrate peptide from Par-3.</title>
        <authorList>
            <person name="Wang C."/>
            <person name="Shang Y."/>
            <person name="Yu J."/>
            <person name="Zhang M."/>
        </authorList>
    </citation>
    <scope>X-RAY CRYSTALLOGRAPHY (2.4 ANGSTROMS) OF 813-840 IN COMPLEX WITH MOUSE PRKCI</scope>
    <scope>PHOSPHORYLATION AT SER-827</scope>
    <scope>MUTAGENESIS OF SER-827 AND SER-829</scope>
</reference>
<accession>Q9Z340</accession>
<sequence>MKVTVCFGRTRVVVPCGDGRMKVFSLIQQAVTRYRKAVAKDPNYWIQVHRLEHGDGGILDLDDILCDVADDKDRLVAVFDEQDPHHGGDGTSASSTGTQSPEIFGSELGTNNVSAFRPYQTTSEIEVTPSVLRANMPLHVRRSSDPALTGLSTSVSDNNFSSEEPSRKNPTRWSTTAGFLKQNTTGSPKTCDRKKDENYRSLPRDPSSWSNQFQRDNARSSLSASHPMVDRWLEKQEQDEEGTEEDSSRVEPVGHADTGLENMPNFSLDDMVKLVQVPNDGGPLGIHVVPFSARGGRTLGLLVKRLEKGGKAEQENLFHENDCIVRINDGDLRNRRFEQAQHMFRQAMRARVIWFHVVPAANKEQYEQLSQREMNNYSPGRFSPDSHCVANRSVANNAPQALPRAPRLSQPPEQLDAHPRLPHSAHASTKPPTAPALAPPNVLSTSVGSVYNTKRVGKRLNIQLKKGTEGLGFSITSRDVTIGGSAPIYVKNILPRGAAIQDGRLKAGDRLIEVNGVDLAGKSQEEVVSLLRSTKMEGTVSLLVFRQEEAFHPREMNAEPSQMQSPKETKAEDEDIVLTPDGTREFLTFEVPLNDSGSAGLGVSVKGNRSKENHADLGIFVKSIINGGAASKDGRLRVNDQLIAVNGESLLGKANQEAMETLRRSMSTEGNKRGMIQLIVARRISRCNELRSPGSPAAPELPIETELDDRERRISHSLYSGIEGLDESPTRNAALSRIMGESGKCQLSPTVNMPHDDTVMIEDDRLPVLPPHLSDQSSSSSHDDVGFIMTEAGTWAKATISDSADCSLSPDVDPVLAFQREGFGRQSMSEKRTKQFSNASQLDFVKTRKSKSMDLGIADETKLNTVDDQRAGSPNRDVGPSLGLKKSSSLESLQTAVAEVTLNGNIPFHRPRPRIIRGRGCNESFRAAIDKSYDKPMVDDDDEGMETLEEDTEESSRSGRESVSTSSDQPSYSLERQMNGDPEKRDKAEKKKDKAGKDKKKDREKEKDKLKAKKGMLKGLGDMFRFGKHRKDDKMEKMGRIKIQDSFTSEEDRVRMKEEQERIQAKTREFRERQARERDYAEIQDFHRTFGCDDELLYGGMSSYDGCLALNARPQSPREGHLMDTLYAQVKKPRSSKPGDSNRSTPSNHDRIQRLRQEFQQAKQDEDVEDRRRTYSFEQSWSSSRPASQSGRHSVSVEVQVQRQRQEERESFQQAQRQYSSLPRQSRKNASSVSQDSWEQNYAPGEGFQSAKENPRYSSYQGSRNGYLGGHGFNARVMLETQELLRQEQRRKEQQLKKQPPADGVRGPFRQDVPPSPSQVARLNRLQTPEKGRPFYS</sequence>
<evidence type="ECO:0000250" key="1"/>
<evidence type="ECO:0000250" key="2">
    <source>
        <dbReference type="UniProtKB" id="Q8TEW0"/>
    </source>
</evidence>
<evidence type="ECO:0000250" key="3">
    <source>
        <dbReference type="UniProtKB" id="Q99NH2"/>
    </source>
</evidence>
<evidence type="ECO:0000255" key="4"/>
<evidence type="ECO:0000255" key="5">
    <source>
        <dbReference type="PROSITE-ProRule" id="PRU00143"/>
    </source>
</evidence>
<evidence type="ECO:0000256" key="6">
    <source>
        <dbReference type="SAM" id="MobiDB-lite"/>
    </source>
</evidence>
<evidence type="ECO:0000269" key="7">
    <source>
    </source>
</evidence>
<evidence type="ECO:0000269" key="8">
    <source>
    </source>
</evidence>
<evidence type="ECO:0000269" key="9">
    <source>
    </source>
</evidence>
<evidence type="ECO:0000269" key="10">
    <source>
    </source>
</evidence>
<evidence type="ECO:0000269" key="11">
    <source>
    </source>
</evidence>
<evidence type="ECO:0000269" key="12">
    <source>
    </source>
</evidence>
<evidence type="ECO:0000303" key="13">
    <source>
    </source>
</evidence>
<evidence type="ECO:0000305" key="14"/>
<evidence type="ECO:0007744" key="15">
    <source>
    </source>
</evidence>
<evidence type="ECO:0007829" key="16">
    <source>
        <dbReference type="PDB" id="2K1Z"/>
    </source>
</evidence>
<evidence type="ECO:0007829" key="17">
    <source>
        <dbReference type="PDB" id="2K20"/>
    </source>
</evidence>
<evidence type="ECO:0007829" key="18">
    <source>
        <dbReference type="PDB" id="2NS5"/>
    </source>
</evidence>
<evidence type="ECO:0007829" key="19">
    <source>
        <dbReference type="PDB" id="2OGP"/>
    </source>
</evidence>
<evidence type="ECO:0007829" key="20">
    <source>
        <dbReference type="PDB" id="4I6P"/>
    </source>
</evidence>
<evidence type="ECO:0007829" key="21">
    <source>
        <dbReference type="PDB" id="6JUE"/>
    </source>
</evidence>
<name>PARD3_RAT</name>
<comment type="function">
    <text evidence="2 3 8 9 10">Adapter protein involved in asymmetrical cell division and cell polarization processes (PubMed:18550519). Seems to play a central role in the formation of epithelial tight junctions (By similarity). Association with PARD6B may prevent the interaction of PARD3 with F11R/JAM1, thereby preventing tight junction assembly (By similarity). The PARD6-PARD3 complex links GTP-bound Rho small GTPases to atypical protein kinase C proteins (By similarity). Required for establishment of neuronal polarity and normal axon formation in cultured hippocampal neurons (By similarity). Involved in Schwann cell peripheral myelination (PubMed:21949390). Targets the phosphatase PTEN to cell junctions (PubMed:18082612).</text>
</comment>
<comment type="subunit">
    <text evidence="2 3 8 9 11 12 14">Component of a complex whose core is composed of ARHGAP17, AMOT, PALS1, PATJ and PARD3/PAR3. Interacts (via PDZ 1 domain) with PARD6A, PARD6B and F11R/JAM1. Interacts with AURKA, AURKB and SIRT2 (By similarity). Interacts with PRKCI. Interacts with PRKCZ (Probable). Part of a complex with PARD6A or PARD6B, PRKCI or PRKCZ and CDC42 or RAC1. Interacts with LIMK2 and CDH5. Component of the Par polarity complex, composed of at least phosphorylated PRKCZ, PARD3 and TIAM1. Directly interacts with TIAM1 and TIAM2. Interacts with ECT2 and FBF1 (By similarity). Interacts (via PDZ 3 domain) with PTEN (via C-terminus). Interacts (via coiled-coil domain) with FRMD4A (By similarity). Found in a complex with PARD3, CYTH1 and FRMD4A (By similarity). Interacts with SAPCD2 (By similarity). Interacts with PRKCA (By similarity).</text>
</comment>
<comment type="subunit">
    <molecule>Isoform 2</molecule>
    <text evidence="3">Interacts with PRKCZ.</text>
</comment>
<comment type="interaction">
    <interactant intactId="EBI-349441">
        <id>Q9Z340</id>
    </interactant>
    <interactant intactId="EBI-349441">
        <id>Q9Z340</id>
        <label>Pard3</label>
    </interactant>
    <organismsDiffer>false</organismsDiffer>
    <experiments>6</experiments>
</comment>
<comment type="subcellular location">
    <subcellularLocation>
        <location evidence="1">Cytoplasm</location>
    </subcellularLocation>
    <subcellularLocation>
        <location>Endomembrane system</location>
    </subcellularLocation>
    <subcellularLocation>
        <location>Cell junction</location>
    </subcellularLocation>
    <subcellularLocation>
        <location evidence="3">Cell junction</location>
        <location evidence="3">Tight junction</location>
    </subcellularLocation>
    <subcellularLocation>
        <location evidence="3">Cell junction</location>
        <location evidence="3">Adherens junction</location>
    </subcellularLocation>
    <subcellularLocation>
        <location evidence="1">Cytoplasm</location>
        <location evidence="1">Cell cortex</location>
    </subcellularLocation>
    <subcellularLocation>
        <location evidence="1">Cytoplasm</location>
        <location evidence="1">Cytoskeleton</location>
    </subcellularLocation>
    <subcellularLocation>
        <location evidence="1">Cell membrane</location>
    </subcellularLocation>
    <text evidence="1">Localized along the cell-cell contact region. Colocalizes with PARD6A and PRKCI at epithelial tight junctions. Colocalizes with the cortical actin that overlays the meiotic spindle during metaphase I and metaphase II. Presence of KRIT1, CDH5 and RAP1B is required for its localization to the cell junction. Colocalized with SIRT2 in internode region of myelin sheath (By similarity).</text>
</comment>
<comment type="alternative products">
    <event type="alternative splicing"/>
    <isoform>
        <id>Q9Z340-1</id>
        <name>1</name>
        <name>180 kDa</name>
        <sequence type="displayed"/>
    </isoform>
    <isoform>
        <id>Q9Z340-2</id>
        <name>2</name>
        <name>150 kDa</name>
        <sequence type="described" ref="VSP_007475"/>
    </isoform>
</comment>
<comment type="tissue specificity">
    <text>Isoform 1 is predominantly expressed in lung, glandular stomach, prostate, ovary and uterus. Isoform 1 is also expressed in brain, with a high expression in the cortex, hippocampus and in the striatum. Isoform 2 is predominantly expressed in intestinal epithelial cells, kidney and prostate.</text>
</comment>
<comment type="domain">
    <text>Contains a conserved N-terminal oligomerization domain (NTD) that is involved in oligomerization and is essential for proper subapical membrane localization.</text>
</comment>
<comment type="domain">
    <text>The second PDZ domain mediates interaction with membranes containing phosphoinositol lipids.</text>
</comment>
<comment type="PTM">
    <text evidence="10">Acetylated. Deacetylated by SIRT2, thereby inhibiting Schwann cell peripheral myelination.</text>
</comment>
<comment type="PTM">
    <text evidence="1">Phosphorylation at Ser-827 by PRKCZ and PRKCI occurs at the most apical tip of epithelial cell-cell contacts during the initial phase of tight junction formation and may promote dissociation of the complex with PARD6. EGF-induced Tyr-1127 phosphorylation mediates dissociation from LIMK2 (By similarity). Phosphorylation by AURKA at Ser-962 is required for the normal establishment of neuronal polarity (By similarity).</text>
</comment>
<comment type="similarity">
    <text evidence="14">Belongs to the PAR3 family.</text>
</comment>
<protein>
    <recommendedName>
        <fullName>Partitioning defective 3 homolog</fullName>
        <shortName>PAR-3</shortName>
        <shortName>PARD-3</shortName>
    </recommendedName>
    <alternativeName>
        <fullName>Atypical PKC isotype-specific-interacting protein</fullName>
        <shortName>ASIP</shortName>
    </alternativeName>
    <alternativeName>
        <fullName>Atypical PKC-specific-binding protein</fullName>
        <shortName>ASBP</shortName>
    </alternativeName>
</protein>
<proteinExistence type="evidence at protein level"/>
<organism>
    <name type="scientific">Rattus norvegicus</name>
    <name type="common">Rat</name>
    <dbReference type="NCBI Taxonomy" id="10116"/>
    <lineage>
        <taxon>Eukaryota</taxon>
        <taxon>Metazoa</taxon>
        <taxon>Chordata</taxon>
        <taxon>Craniata</taxon>
        <taxon>Vertebrata</taxon>
        <taxon>Euteleostomi</taxon>
        <taxon>Mammalia</taxon>
        <taxon>Eutheria</taxon>
        <taxon>Euarchontoglires</taxon>
        <taxon>Glires</taxon>
        <taxon>Rodentia</taxon>
        <taxon>Myomorpha</taxon>
        <taxon>Muroidea</taxon>
        <taxon>Muridae</taxon>
        <taxon>Murinae</taxon>
        <taxon>Rattus</taxon>
    </lineage>
</organism>